<comment type="function">
    <text evidence="3">May function in trans to edit the amino acid moiety from incorrectly charged tRNA(Ala).</text>
</comment>
<comment type="cofactor">
    <cofactor evidence="3">
        <name>Zn(2+)</name>
        <dbReference type="ChEBI" id="CHEBI:29105"/>
    </cofactor>
    <text evidence="3">Binds 1 zinc ion per subunit.</text>
</comment>
<comment type="miscellaneous">
    <text evidence="2">Present with 1470 molecules/cell in log phase SD medium.</text>
</comment>
<comment type="similarity">
    <text evidence="3">Belongs to the class-II aminoacyl-tRNA synthetase family. Alax-L subfamily.</text>
</comment>
<comment type="caution">
    <text evidence="4 5">Conflicting data shows that it is not able to edit the amino acid moiety from incorrectly charged Ser-tRNA(Ala) in trans (PubMed:14663147). Another paper shows that this protein can edit mischarged Ser-tRNA(Ala) but not Gly-tRNA(Ala) in trans (PubMed:20010690). Experiments are not well detailed in either paper.</text>
</comment>
<gene>
    <name type="ordered locus">YNL040W</name>
    <name type="ORF">N2679</name>
</gene>
<evidence type="ECO:0000255" key="1"/>
<evidence type="ECO:0000269" key="2">
    <source>
    </source>
</evidence>
<evidence type="ECO:0000305" key="3"/>
<evidence type="ECO:0000305" key="4">
    <source>
    </source>
</evidence>
<evidence type="ECO:0000305" key="5">
    <source>
    </source>
</evidence>
<name>YNE0_YEAST</name>
<feature type="chain" id="PRO_0000203457" description="Putative alanyl-tRNA editing protein alaX">
    <location>
        <begin position="1"/>
        <end position="456"/>
    </location>
</feature>
<feature type="binding site" evidence="1">
    <location>
        <position position="125"/>
    </location>
    <ligand>
        <name>Zn(2+)</name>
        <dbReference type="ChEBI" id="CHEBI:29105"/>
    </ligand>
</feature>
<feature type="binding site" evidence="1">
    <location>
        <position position="129"/>
    </location>
    <ligand>
        <name>Zn(2+)</name>
        <dbReference type="ChEBI" id="CHEBI:29105"/>
    </ligand>
</feature>
<feature type="binding site" evidence="1">
    <location>
        <position position="240"/>
    </location>
    <ligand>
        <name>Zn(2+)</name>
        <dbReference type="ChEBI" id="CHEBI:29105"/>
    </ligand>
</feature>
<feature type="binding site" evidence="1">
    <location>
        <position position="244"/>
    </location>
    <ligand>
        <name>Zn(2+)</name>
        <dbReference type="ChEBI" id="CHEBI:29105"/>
    </ligand>
</feature>
<accession>P53960</accession>
<accession>D6W1D9</accession>
<reference key="1">
    <citation type="journal article" date="1997" name="Nature">
        <title>The nucleotide sequence of Saccharomyces cerevisiae chromosome XIV and its evolutionary implications.</title>
        <authorList>
            <person name="Philippsen P."/>
            <person name="Kleine K."/>
            <person name="Poehlmann R."/>
            <person name="Duesterhoeft A."/>
            <person name="Hamberg K."/>
            <person name="Hegemann J.H."/>
            <person name="Obermaier B."/>
            <person name="Urrestarazu L.A."/>
            <person name="Aert R."/>
            <person name="Albermann K."/>
            <person name="Altmann R."/>
            <person name="Andre B."/>
            <person name="Baladron V."/>
            <person name="Ballesta J.P.G."/>
            <person name="Becam A.-M."/>
            <person name="Beinhauer J.D."/>
            <person name="Boskovic J."/>
            <person name="Buitrago M.J."/>
            <person name="Bussereau F."/>
            <person name="Coster F."/>
            <person name="Crouzet M."/>
            <person name="D'Angelo M."/>
            <person name="Dal Pero F."/>
            <person name="De Antoni A."/>
            <person name="del Rey F."/>
            <person name="Doignon F."/>
            <person name="Domdey H."/>
            <person name="Dubois E."/>
            <person name="Fiedler T.A."/>
            <person name="Fleig U."/>
            <person name="Floeth M."/>
            <person name="Fritz C."/>
            <person name="Gaillardin C."/>
            <person name="Garcia-Cantalejo J.M."/>
            <person name="Glansdorff N."/>
            <person name="Goffeau A."/>
            <person name="Gueldener U."/>
            <person name="Herbert C.J."/>
            <person name="Heumann K."/>
            <person name="Heuss-Neitzel D."/>
            <person name="Hilbert H."/>
            <person name="Hinni K."/>
            <person name="Iraqui Houssaini I."/>
            <person name="Jacquet M."/>
            <person name="Jimenez A."/>
            <person name="Jonniaux J.-L."/>
            <person name="Karpfinger-Hartl L."/>
            <person name="Lanfranchi G."/>
            <person name="Lepingle A."/>
            <person name="Levesque H."/>
            <person name="Lyck R."/>
            <person name="Maftahi M."/>
            <person name="Mallet L."/>
            <person name="Maurer C.T.C."/>
            <person name="Messenguy F."/>
            <person name="Mewes H.-W."/>
            <person name="Moestl D."/>
            <person name="Nasr F."/>
            <person name="Nicaud J.-M."/>
            <person name="Niedenthal R.K."/>
            <person name="Pandolfo D."/>
            <person name="Pierard A."/>
            <person name="Piravandi E."/>
            <person name="Planta R.J."/>
            <person name="Pohl T.M."/>
            <person name="Purnelle B."/>
            <person name="Rebischung C."/>
            <person name="Remacha M.A."/>
            <person name="Revuelta J.L."/>
            <person name="Rinke M."/>
            <person name="Saiz J.E."/>
            <person name="Sartorello F."/>
            <person name="Scherens B."/>
            <person name="Sen-Gupta M."/>
            <person name="Soler-Mira A."/>
            <person name="Urbanus J.H.M."/>
            <person name="Valle G."/>
            <person name="Van Dyck L."/>
            <person name="Verhasselt P."/>
            <person name="Vierendeels F."/>
            <person name="Vissers S."/>
            <person name="Voet M."/>
            <person name="Volckaert G."/>
            <person name="Wach A."/>
            <person name="Wambutt R."/>
            <person name="Wedler H."/>
            <person name="Zollner A."/>
            <person name="Hani J."/>
        </authorList>
    </citation>
    <scope>NUCLEOTIDE SEQUENCE [LARGE SCALE GENOMIC DNA]</scope>
    <source>
        <strain>ATCC 204508 / S288c</strain>
    </source>
</reference>
<reference key="2">
    <citation type="journal article" date="2014" name="G3 (Bethesda)">
        <title>The reference genome sequence of Saccharomyces cerevisiae: Then and now.</title>
        <authorList>
            <person name="Engel S.R."/>
            <person name="Dietrich F.S."/>
            <person name="Fisk D.G."/>
            <person name="Binkley G."/>
            <person name="Balakrishnan R."/>
            <person name="Costanzo M.C."/>
            <person name="Dwight S.S."/>
            <person name="Hitz B.C."/>
            <person name="Karra K."/>
            <person name="Nash R.S."/>
            <person name="Weng S."/>
            <person name="Wong E.D."/>
            <person name="Lloyd P."/>
            <person name="Skrzypek M.S."/>
            <person name="Miyasato S.R."/>
            <person name="Simison M."/>
            <person name="Cherry J.M."/>
        </authorList>
    </citation>
    <scope>GENOME REANNOTATION</scope>
    <source>
        <strain>ATCC 204508 / S288c</strain>
    </source>
</reference>
<reference key="3">
    <citation type="journal article" date="2003" name="Nature">
        <title>Global analysis of protein expression in yeast.</title>
        <authorList>
            <person name="Ghaemmaghami S."/>
            <person name="Huh W.-K."/>
            <person name="Bower K."/>
            <person name="Howson R.W."/>
            <person name="Belle A."/>
            <person name="Dephoure N."/>
            <person name="O'Shea E.K."/>
            <person name="Weissman J.S."/>
        </authorList>
    </citation>
    <scope>LEVEL OF PROTEIN EXPRESSION [LARGE SCALE ANALYSIS]</scope>
</reference>
<reference key="4">
    <citation type="journal article" date="2003" name="Proc. Natl. Acad. Sci. U.S.A.">
        <title>Trans-editing of mischarged tRNAs.</title>
        <authorList>
            <person name="Ahel I."/>
            <person name="Korencic D."/>
            <person name="Ibba M."/>
            <person name="Soll D."/>
        </authorList>
    </citation>
    <scope>LACK OF EDITING ACTIVITY ON MISCHARGED TRNA(ALA)</scope>
</reference>
<reference key="5">
    <citation type="journal article" date="2009" name="Nature">
        <title>Paradox of mistranslation of serine for alanine caused by AlaRS recognition dilemma.</title>
        <authorList>
            <person name="Guo M."/>
            <person name="Chong Y.E."/>
            <person name="Shapiro R."/>
            <person name="Beebe K."/>
            <person name="Yang X.L."/>
            <person name="Schimmel P."/>
        </authorList>
    </citation>
    <scope>FUNCTION AS TRNA(ALA) EDITING PROTEIN</scope>
</reference>
<reference key="6">
    <citation type="journal article" date="2009" name="Science">
        <title>Global analysis of Cdk1 substrate phosphorylation sites provides insights into evolution.</title>
        <authorList>
            <person name="Holt L.J."/>
            <person name="Tuch B.B."/>
            <person name="Villen J."/>
            <person name="Johnson A.D."/>
            <person name="Gygi S.P."/>
            <person name="Morgan D.O."/>
        </authorList>
    </citation>
    <scope>IDENTIFICATION BY MASS SPECTROMETRY [LARGE SCALE ANALYSIS]</scope>
</reference>
<keyword id="KW-0479">Metal-binding</keyword>
<keyword id="KW-0648">Protein biosynthesis</keyword>
<keyword id="KW-1185">Reference proteome</keyword>
<keyword id="KW-0862">Zinc</keyword>
<organism>
    <name type="scientific">Saccharomyces cerevisiae (strain ATCC 204508 / S288c)</name>
    <name type="common">Baker's yeast</name>
    <dbReference type="NCBI Taxonomy" id="559292"/>
    <lineage>
        <taxon>Eukaryota</taxon>
        <taxon>Fungi</taxon>
        <taxon>Dikarya</taxon>
        <taxon>Ascomycota</taxon>
        <taxon>Saccharomycotina</taxon>
        <taxon>Saccharomycetes</taxon>
        <taxon>Saccharomycetales</taxon>
        <taxon>Saccharomycetaceae</taxon>
        <taxon>Saccharomyces</taxon>
    </lineage>
</organism>
<proteinExistence type="evidence at protein level"/>
<dbReference type="EMBL" id="Z71316">
    <property type="protein sequence ID" value="CAA95907.1"/>
    <property type="molecule type" value="Genomic_DNA"/>
</dbReference>
<dbReference type="EMBL" id="BK006947">
    <property type="protein sequence ID" value="DAA10505.1"/>
    <property type="molecule type" value="Genomic_DNA"/>
</dbReference>
<dbReference type="PIR" id="S62962">
    <property type="entry name" value="S62962"/>
</dbReference>
<dbReference type="RefSeq" id="NP_014358.3">
    <property type="nucleotide sequence ID" value="NM_001182879.3"/>
</dbReference>
<dbReference type="SMR" id="P53960"/>
<dbReference type="BioGRID" id="35784">
    <property type="interactions" value="111"/>
</dbReference>
<dbReference type="DIP" id="DIP-6332N"/>
<dbReference type="FunCoup" id="P53960">
    <property type="interactions" value="284"/>
</dbReference>
<dbReference type="IntAct" id="P53960">
    <property type="interactions" value="2"/>
</dbReference>
<dbReference type="MINT" id="P53960"/>
<dbReference type="STRING" id="4932.YNL040W"/>
<dbReference type="iPTMnet" id="P53960"/>
<dbReference type="PaxDb" id="4932-YNL040W"/>
<dbReference type="PeptideAtlas" id="P53960"/>
<dbReference type="EnsemblFungi" id="YNL040W_mRNA">
    <property type="protein sequence ID" value="YNL040W"/>
    <property type="gene ID" value="YNL040W"/>
</dbReference>
<dbReference type="GeneID" id="855688"/>
<dbReference type="KEGG" id="sce:YNL040W"/>
<dbReference type="AGR" id="SGD:S000004985"/>
<dbReference type="SGD" id="S000004985">
    <property type="gene designation" value="YNL040W"/>
</dbReference>
<dbReference type="VEuPathDB" id="FungiDB:YNL040W"/>
<dbReference type="eggNOG" id="KOG2105">
    <property type="taxonomic scope" value="Eukaryota"/>
</dbReference>
<dbReference type="GeneTree" id="ENSGT00940000156241"/>
<dbReference type="HOGENOM" id="CLU_004485_7_1_1"/>
<dbReference type="InParanoid" id="P53960"/>
<dbReference type="OMA" id="KYDTTSW"/>
<dbReference type="OrthoDB" id="288942at2759"/>
<dbReference type="BioCyc" id="YEAST:G3O-33076-MONOMER"/>
<dbReference type="BioGRID-ORCS" id="855688">
    <property type="hits" value="2 hits in 10 CRISPR screens"/>
</dbReference>
<dbReference type="PRO" id="PR:P53960"/>
<dbReference type="Proteomes" id="UP000002311">
    <property type="component" value="Chromosome XIV"/>
</dbReference>
<dbReference type="RNAct" id="P53960">
    <property type="molecule type" value="protein"/>
</dbReference>
<dbReference type="GO" id="GO:0005737">
    <property type="term" value="C:cytoplasm"/>
    <property type="evidence" value="ECO:0007005"/>
    <property type="project" value="SGD"/>
</dbReference>
<dbReference type="GO" id="GO:0004812">
    <property type="term" value="F:aminoacyl-tRNA ligase activity"/>
    <property type="evidence" value="ECO:0007669"/>
    <property type="project" value="InterPro"/>
</dbReference>
<dbReference type="GO" id="GO:0005524">
    <property type="term" value="F:ATP binding"/>
    <property type="evidence" value="ECO:0007669"/>
    <property type="project" value="InterPro"/>
</dbReference>
<dbReference type="GO" id="GO:0043905">
    <property type="term" value="F:L-seryl-tRNA(Thr) hydrolase activity"/>
    <property type="evidence" value="ECO:0000314"/>
    <property type="project" value="SGD"/>
</dbReference>
<dbReference type="GO" id="GO:0046872">
    <property type="term" value="F:metal ion binding"/>
    <property type="evidence" value="ECO:0007669"/>
    <property type="project" value="UniProtKB-KW"/>
</dbReference>
<dbReference type="GO" id="GO:0002196">
    <property type="term" value="F:Ser-tRNA(Ala) deacylase activity"/>
    <property type="evidence" value="ECO:0000314"/>
    <property type="project" value="UniProtKB"/>
</dbReference>
<dbReference type="GO" id="GO:0106074">
    <property type="term" value="P:aminoacyl-tRNA metabolism involved in translational fidelity"/>
    <property type="evidence" value="ECO:0000315"/>
    <property type="project" value="SGD"/>
</dbReference>
<dbReference type="GO" id="GO:0006450">
    <property type="term" value="P:regulation of translational fidelity"/>
    <property type="evidence" value="ECO:0000318"/>
    <property type="project" value="GO_Central"/>
</dbReference>
<dbReference type="GO" id="GO:0006412">
    <property type="term" value="P:translation"/>
    <property type="evidence" value="ECO:0007669"/>
    <property type="project" value="UniProtKB-KW"/>
</dbReference>
<dbReference type="GO" id="GO:0043039">
    <property type="term" value="P:tRNA aminoacylation"/>
    <property type="evidence" value="ECO:0007669"/>
    <property type="project" value="InterPro"/>
</dbReference>
<dbReference type="FunFam" id="3.30.980.10:FF:000012">
    <property type="entry name" value="Threonyl/alanyl tRNA synthetase"/>
    <property type="match status" value="1"/>
</dbReference>
<dbReference type="FunFam" id="2.40.30.130:FF:000016">
    <property type="entry name" value="YNL040W-like protein"/>
    <property type="match status" value="1"/>
</dbReference>
<dbReference type="Gene3D" id="2.40.30.130">
    <property type="match status" value="1"/>
</dbReference>
<dbReference type="Gene3D" id="3.30.980.10">
    <property type="entry name" value="Threonyl-trna Synthetase, Chain A, domain 2"/>
    <property type="match status" value="1"/>
</dbReference>
<dbReference type="InterPro" id="IPR051335">
    <property type="entry name" value="Alanyl-tRNA_Editing_Enzymes"/>
</dbReference>
<dbReference type="InterPro" id="IPR018163">
    <property type="entry name" value="Thr/Ala-tRNA-synth_IIc_edit"/>
</dbReference>
<dbReference type="InterPro" id="IPR009000">
    <property type="entry name" value="Transl_B-barrel_sf"/>
</dbReference>
<dbReference type="InterPro" id="IPR012947">
    <property type="entry name" value="tRNA_SAD"/>
</dbReference>
<dbReference type="PANTHER" id="PTHR43462">
    <property type="entry name" value="ALANYL-TRNA EDITING PROTEIN"/>
    <property type="match status" value="1"/>
</dbReference>
<dbReference type="PANTHER" id="PTHR43462:SF1">
    <property type="entry name" value="ALANYL-TRNA EDITING PROTEIN AARSD1"/>
    <property type="match status" value="1"/>
</dbReference>
<dbReference type="Pfam" id="PF07973">
    <property type="entry name" value="tRNA_SAD"/>
    <property type="match status" value="1"/>
</dbReference>
<dbReference type="SMART" id="SM00863">
    <property type="entry name" value="tRNA_SAD"/>
    <property type="match status" value="1"/>
</dbReference>
<dbReference type="SUPFAM" id="SSF55186">
    <property type="entry name" value="ThrRS/AlaRS common domain"/>
    <property type="match status" value="1"/>
</dbReference>
<dbReference type="SUPFAM" id="SSF50447">
    <property type="entry name" value="Translation proteins"/>
    <property type="match status" value="1"/>
</dbReference>
<sequence>MPTPMTPVKVGALACQRNSFLFDGFKTLVVSCEPTKNKKGEIEGYEIELQDTILFPEGGGQPSDSGFLKIVEGNRNSSKIEKILVSHVSRFGLHAKHHVNDYIEPGTTVEVAVDEQKRMDYMQQHTGQHLLSAILERNYKVDTVSWSMGGIITKKKPVLEPSDYFNYIELNRKLTLDEITNVSDEINQLIINFPQEIIVEERIGEETVDEVSTSKIPDDYDLSKGVLRTIHIGDIDSNPCCGTHLKCTSQIGSILILSNQSAVRGSNSRLYFMCGKRVSLYAKSVNKILLDSKNLLSCSETQISEKITRQTKQIQQLNKREQYWIKRLARTASEELMNTLKASGKKRAYFMEEEYGTLELLLQIHKEVSNFLKDDTEGYEIILCGYERQTNTGSLLILSESGEKIANLAANLGSILQNLKGGGGKKGGKWQGKITSISNAEFAALSDYLSHDFASC</sequence>
<protein>
    <recommendedName>
        <fullName>Putative alanyl-tRNA editing protein alaX</fullName>
        <shortName>AlaX</shortName>
        <shortName>AlaXp</shortName>
        <shortName>AlaXp-II</shortName>
    </recommendedName>
    <alternativeName>
        <fullName>Alanyl-tRNA deacylase alaX</fullName>
    </alternativeName>
</protein>